<organism>
    <name type="scientific">Saccharomyces cerevisiae (strain ATCC 204508 / S288c)</name>
    <name type="common">Baker's yeast</name>
    <dbReference type="NCBI Taxonomy" id="559292"/>
    <lineage>
        <taxon>Eukaryota</taxon>
        <taxon>Fungi</taxon>
        <taxon>Dikarya</taxon>
        <taxon>Ascomycota</taxon>
        <taxon>Saccharomycotina</taxon>
        <taxon>Saccharomycetes</taxon>
        <taxon>Saccharomycetales</taxon>
        <taxon>Saccharomycetaceae</taxon>
        <taxon>Saccharomyces</taxon>
    </lineage>
</organism>
<feature type="signal peptide" evidence="3">
    <location>
        <begin position="1"/>
        <end position="19"/>
    </location>
</feature>
<feature type="chain" id="PRO_0000010481" description="1,3-beta-glucanosyltransferase GAS5">
    <location>
        <begin position="20"/>
        <end position="462"/>
    </location>
</feature>
<feature type="propeptide" id="PRO_0000010482" description="Removed in mature form" evidence="3">
    <location>
        <begin position="463"/>
        <end position="484"/>
    </location>
</feature>
<feature type="region of interest" description="Disordered" evidence="4">
    <location>
        <begin position="383"/>
        <end position="462"/>
    </location>
</feature>
<feature type="compositionally biased region" description="Acidic residues" evidence="4">
    <location>
        <begin position="394"/>
        <end position="404"/>
    </location>
</feature>
<feature type="compositionally biased region" description="Low complexity" evidence="4">
    <location>
        <begin position="405"/>
        <end position="462"/>
    </location>
</feature>
<feature type="active site" description="Proton donor" evidence="1">
    <location>
        <position position="160"/>
    </location>
</feature>
<feature type="active site" description="Nucleophile" evidence="1">
    <location>
        <position position="262"/>
    </location>
</feature>
<feature type="binding site" evidence="2">
    <location>
        <position position="89"/>
    </location>
    <ligand>
        <name>(1,3-beta-D-glucosyl)n</name>
        <dbReference type="ChEBI" id="CHEBI:37671"/>
        <label>1</label>
        <note>donor substrate</note>
    </ligand>
</feature>
<feature type="binding site" evidence="2">
    <location>
        <position position="159"/>
    </location>
    <ligand>
        <name>(1,3-beta-D-glucosyl)n</name>
        <dbReference type="ChEBI" id="CHEBI:37671"/>
        <label>1</label>
        <note>donor substrate</note>
    </ligand>
</feature>
<feature type="binding site" evidence="2">
    <location>
        <position position="160"/>
    </location>
    <ligand>
        <name>(1,3-beta-D-glucosyl)n</name>
        <dbReference type="ChEBI" id="CHEBI:37671"/>
        <label>2</label>
        <note>acceptor substrate</note>
    </ligand>
</feature>
<feature type="binding site" evidence="2">
    <location>
        <position position="201"/>
    </location>
    <ligand>
        <name>(1,3-beta-D-glucosyl)n</name>
        <dbReference type="ChEBI" id="CHEBI:37671"/>
        <label>2</label>
        <note>acceptor substrate</note>
    </ligand>
</feature>
<feature type="binding site" evidence="2">
    <location>
        <position position="206"/>
    </location>
    <ligand>
        <name>(1,3-beta-D-glucosyl)n</name>
        <dbReference type="ChEBI" id="CHEBI:37671"/>
        <label>2</label>
        <note>acceptor substrate</note>
    </ligand>
</feature>
<feature type="binding site" evidence="2">
    <location>
        <position position="295"/>
    </location>
    <ligand>
        <name>(1,3-beta-D-glucosyl)n</name>
        <dbReference type="ChEBI" id="CHEBI:37671"/>
        <label>1</label>
        <note>donor substrate</note>
    </ligand>
</feature>
<feature type="lipid moiety-binding region" description="GPI-anchor amidated glycine" evidence="3">
    <location>
        <position position="462"/>
    </location>
</feature>
<feature type="glycosylation site" description="N-linked (GlcNAc...) asparagine" evidence="3">
    <location>
        <position position="24"/>
    </location>
</feature>
<feature type="glycosylation site" description="N-linked (GlcNAc...) asparagine" evidence="3">
    <location>
        <position position="60"/>
    </location>
</feature>
<feature type="glycosylation site" description="N-linked (GlcNAc...) asparagine" evidence="3">
    <location>
        <position position="166"/>
    </location>
</feature>
<feature type="glycosylation site" description="N-linked (GlcNAc...) asparagine" evidence="3">
    <location>
        <position position="299"/>
    </location>
</feature>
<feature type="glycosylation site" description="N-linked (GlcNAc...) asparagine" evidence="3">
    <location>
        <position position="344"/>
    </location>
</feature>
<feature type="glycosylation site" description="N-linked (GlcNAc...) asparagine" evidence="3">
    <location>
        <position position="359"/>
    </location>
</feature>
<feature type="disulfide bond" evidence="2">
    <location>
        <begin position="71"/>
        <end position="100"/>
    </location>
</feature>
<feature type="disulfide bond" evidence="2">
    <location>
        <begin position="215"/>
        <end position="348"/>
    </location>
</feature>
<feature type="disulfide bond" evidence="2">
    <location>
        <begin position="234"/>
        <end position="265"/>
    </location>
</feature>
<name>GAS5_YEAST</name>
<proteinExistence type="evidence at protein level"/>
<evidence type="ECO:0000250" key="1"/>
<evidence type="ECO:0000250" key="2">
    <source>
        <dbReference type="UniProtKB" id="Q06135"/>
    </source>
</evidence>
<evidence type="ECO:0000255" key="3"/>
<evidence type="ECO:0000256" key="4">
    <source>
        <dbReference type="SAM" id="MobiDB-lite"/>
    </source>
</evidence>
<evidence type="ECO:0000269" key="5">
    <source>
    </source>
</evidence>
<evidence type="ECO:0000269" key="6">
    <source>
    </source>
</evidence>
<evidence type="ECO:0000269" key="7">
    <source>
    </source>
</evidence>
<evidence type="ECO:0000305" key="8"/>
<keyword id="KW-0134">Cell wall</keyword>
<keyword id="KW-0961">Cell wall biogenesis/degradation</keyword>
<keyword id="KW-1015">Disulfide bond</keyword>
<keyword id="KW-0325">Glycoprotein</keyword>
<keyword id="KW-0336">GPI-anchor</keyword>
<keyword id="KW-0449">Lipoprotein</keyword>
<keyword id="KW-0472">Membrane</keyword>
<keyword id="KW-1185">Reference proteome</keyword>
<keyword id="KW-0964">Secreted</keyword>
<keyword id="KW-0732">Signal</keyword>
<keyword id="KW-0808">Transferase</keyword>
<reference key="1">
    <citation type="journal article" date="1997" name="Nature">
        <title>The nucleotide sequence of Saccharomyces cerevisiae chromosome XV.</title>
        <authorList>
            <person name="Dujon B."/>
            <person name="Albermann K."/>
            <person name="Aldea M."/>
            <person name="Alexandraki D."/>
            <person name="Ansorge W."/>
            <person name="Arino J."/>
            <person name="Benes V."/>
            <person name="Bohn C."/>
            <person name="Bolotin-Fukuhara M."/>
            <person name="Bordonne R."/>
            <person name="Boyer J."/>
            <person name="Camasses A."/>
            <person name="Casamayor A."/>
            <person name="Casas C."/>
            <person name="Cheret G."/>
            <person name="Cziepluch C."/>
            <person name="Daignan-Fornier B."/>
            <person name="Dang V.-D."/>
            <person name="de Haan M."/>
            <person name="Delius H."/>
            <person name="Durand P."/>
            <person name="Fairhead C."/>
            <person name="Feldmann H."/>
            <person name="Gaillon L."/>
            <person name="Galisson F."/>
            <person name="Gamo F.-J."/>
            <person name="Gancedo C."/>
            <person name="Goffeau A."/>
            <person name="Goulding S.E."/>
            <person name="Grivell L.A."/>
            <person name="Habbig B."/>
            <person name="Hand N.J."/>
            <person name="Hani J."/>
            <person name="Hattenhorst U."/>
            <person name="Hebling U."/>
            <person name="Hernando Y."/>
            <person name="Herrero E."/>
            <person name="Heumann K."/>
            <person name="Hiesel R."/>
            <person name="Hilger F."/>
            <person name="Hofmann B."/>
            <person name="Hollenberg C.P."/>
            <person name="Hughes B."/>
            <person name="Jauniaux J.-C."/>
            <person name="Kalogeropoulos A."/>
            <person name="Katsoulou C."/>
            <person name="Kordes E."/>
            <person name="Lafuente M.J."/>
            <person name="Landt O."/>
            <person name="Louis E.J."/>
            <person name="Maarse A.C."/>
            <person name="Madania A."/>
            <person name="Mannhaupt G."/>
            <person name="Marck C."/>
            <person name="Martin R.P."/>
            <person name="Mewes H.-W."/>
            <person name="Michaux G."/>
            <person name="Paces V."/>
            <person name="Parle-McDermott A.G."/>
            <person name="Pearson B.M."/>
            <person name="Perrin A."/>
            <person name="Pettersson B."/>
            <person name="Poch O."/>
            <person name="Pohl T.M."/>
            <person name="Poirey R."/>
            <person name="Portetelle D."/>
            <person name="Pujol A."/>
            <person name="Purnelle B."/>
            <person name="Ramezani Rad M."/>
            <person name="Rechmann S."/>
            <person name="Schwager C."/>
            <person name="Schweizer M."/>
            <person name="Sor F."/>
            <person name="Sterky F."/>
            <person name="Tarassov I.A."/>
            <person name="Teodoru C."/>
            <person name="Tettelin H."/>
            <person name="Thierry A."/>
            <person name="Tobiasch E."/>
            <person name="Tzermia M."/>
            <person name="Uhlen M."/>
            <person name="Unseld M."/>
            <person name="Valens M."/>
            <person name="Vandenbol M."/>
            <person name="Vetter I."/>
            <person name="Vlcek C."/>
            <person name="Voet M."/>
            <person name="Volckaert G."/>
            <person name="Voss H."/>
            <person name="Wambutt R."/>
            <person name="Wedler H."/>
            <person name="Wiemann S."/>
            <person name="Winsor B."/>
            <person name="Wolfe K.H."/>
            <person name="Zollner A."/>
            <person name="Zumstein E."/>
            <person name="Kleine K."/>
        </authorList>
    </citation>
    <scope>NUCLEOTIDE SEQUENCE [LARGE SCALE GENOMIC DNA]</scope>
    <source>
        <strain>ATCC 204508 / S288c</strain>
    </source>
</reference>
<reference key="2">
    <citation type="journal article" date="2014" name="G3 (Bethesda)">
        <title>The reference genome sequence of Saccharomyces cerevisiae: Then and now.</title>
        <authorList>
            <person name="Engel S.R."/>
            <person name="Dietrich F.S."/>
            <person name="Fisk D.G."/>
            <person name="Binkley G."/>
            <person name="Balakrishnan R."/>
            <person name="Costanzo M.C."/>
            <person name="Dwight S.S."/>
            <person name="Hitz B.C."/>
            <person name="Karra K."/>
            <person name="Nash R.S."/>
            <person name="Weng S."/>
            <person name="Wong E.D."/>
            <person name="Lloyd P."/>
            <person name="Skrzypek M.S."/>
            <person name="Miyasato S.R."/>
            <person name="Simison M."/>
            <person name="Cherry J.M."/>
        </authorList>
    </citation>
    <scope>GENOME REANNOTATION</scope>
    <source>
        <strain>ATCC 204508 / S288c</strain>
    </source>
</reference>
<reference key="3">
    <citation type="journal article" date="2007" name="Genome Res.">
        <title>Approaching a complete repository of sequence-verified protein-encoding clones for Saccharomyces cerevisiae.</title>
        <authorList>
            <person name="Hu Y."/>
            <person name="Rolfs A."/>
            <person name="Bhullar B."/>
            <person name="Murthy T.V.S."/>
            <person name="Zhu C."/>
            <person name="Berger M.F."/>
            <person name="Camargo A.A."/>
            <person name="Kelley F."/>
            <person name="McCarron S."/>
            <person name="Jepson D."/>
            <person name="Richardson A."/>
            <person name="Raphael J."/>
            <person name="Moreira D."/>
            <person name="Taycher E."/>
            <person name="Zuo D."/>
            <person name="Mohr S."/>
            <person name="Kane M.F."/>
            <person name="Williamson J."/>
            <person name="Simpson A.J.G."/>
            <person name="Bulyk M.L."/>
            <person name="Harlow E."/>
            <person name="Marsischky G."/>
            <person name="Kolodner R.D."/>
            <person name="LaBaer J."/>
        </authorList>
    </citation>
    <scope>NUCLEOTIDE SEQUENCE [GENOMIC DNA]</scope>
    <source>
        <strain>ATCC 204508 / S288c</strain>
    </source>
</reference>
<reference key="4">
    <citation type="journal article" date="2003" name="Nature">
        <title>Global analysis of protein expression in yeast.</title>
        <authorList>
            <person name="Ghaemmaghami S."/>
            <person name="Huh W.-K."/>
            <person name="Bower K."/>
            <person name="Howson R.W."/>
            <person name="Belle A."/>
            <person name="Dephoure N."/>
            <person name="O'Shea E.K."/>
            <person name="Weissman J.S."/>
        </authorList>
    </citation>
    <scope>LEVEL OF PROTEIN EXPRESSION [LARGE SCALE ANALYSIS]</scope>
</reference>
<reference key="5">
    <citation type="journal article" date="2005" name="J. Biol. Chem.">
        <title>Comprehensive proteomic analysis of Saccharomyces cerevisiae cell walls: identification of proteins covalently attached via glycosylphosphatidylinositol remnants or mild alkali-sensitive linkages.</title>
        <authorList>
            <person name="Yin Q.Y."/>
            <person name="de Groot P.W.J."/>
            <person name="Dekker H.L."/>
            <person name="de Jong L."/>
            <person name="Klis F.M."/>
            <person name="de Koster C.G."/>
        </authorList>
    </citation>
    <scope>SUBCELLULAR LOCATION</scope>
    <scope>IDENTIFICATION BY MASS SPECTROMETRY</scope>
    <scope>GPI-ANCHOR</scope>
</reference>
<reference key="6">
    <citation type="journal article" date="2007" name="Yeast">
        <title>The Gas family of proteins of Saccharomyces cerevisiae: characterization and evolutionary analysis.</title>
        <authorList>
            <person name="Ragni E."/>
            <person name="Fontaine T."/>
            <person name="Gissi C."/>
            <person name="Latge J.-P."/>
            <person name="Popolo L."/>
        </authorList>
    </citation>
    <scope>FUNCTION</scope>
</reference>
<comment type="function">
    <text evidence="7">Splits internally a 1,3-beta-glucan molecule and transfers the newly generated reducing end (the donor) to the non-reducing end of another 1,3-beta-glucan molecule (the acceptor) forming a 1,3-beta linkage, resulting in the elongation of 1,3-beta-glucan chains in the cell wall. Involved in cell wall biosynthesis and morphogenesis.</text>
</comment>
<comment type="subcellular location">
    <subcellularLocation>
        <location evidence="6">Secreted</location>
        <location evidence="6">Cell wall</location>
    </subcellularLocation>
    <subcellularLocation>
        <location evidence="6">Membrane</location>
        <topology evidence="6">Lipid-anchor</topology>
        <topology evidence="6">GPI-anchor</topology>
    </subcellularLocation>
    <text>Covalently-linked GPI-modified cell wall protein (GPI-CWP).</text>
</comment>
<comment type="PTM">
    <text>The GPI-anchor is attached to the protein in the endoplasmic reticulum and serves to target the protein to the cell surface. There, the glucosamine-inositol phospholipid moiety is cleaved off and the GPI-modified mannoprotein is covalently attached via its lipidless GPI glycan remnant to the 1,6-beta-glucan of the outer cell wall layer.</text>
</comment>
<comment type="miscellaneous">
    <text evidence="5">Present with 11700 molecules/cell in log phase SD medium.</text>
</comment>
<comment type="similarity">
    <text evidence="8">Belongs to the glycosyl hydrolase 72 family.</text>
</comment>
<protein>
    <recommendedName>
        <fullName>1,3-beta-glucanosyltransferase GAS5</fullName>
        <ecNumber>2.4.1.-</ecNumber>
    </recommendedName>
    <alternativeName>
        <fullName>Glycolipid-anchored surface protein 5</fullName>
    </alternativeName>
</protein>
<sequence length="484" mass="51870">MLLRSLTSAFVLSAGLAQAASSSNSSTPSIEIKGNAFFNSESGERFYIRGVDYQPGGSSNLTDPLADASVCDRDVPVLKDLGINTVRVYTVDNSQDHSHCMKLLQENGIYLILDVNTPTSAISRYDPACSYNADYLQNVFATIDTFADYDNVLGFFAGNEVINSVNTTNTATYVKAVVRDMKKYIKARKYRQIPVGYSAADIVANRQLAAEYFNCGDEADARIDMFGVNDYSWCGESSFVVSGYSTKMKLYQDYSVPVFLSEFGCNQVKSSRPFTEIEAIYSTQMSSVFSGGLVYEYSNETNNYGLVQIDGDKVTKLTDFENLKNEYSKVSNPEGNGGYSTSNNYSTCPDYEKGVWEANNTLPAMPSAASAYFTSGAGSPMGTGIATQQSCDAKDDDDEEDDDTSSSSSSSSSSSSSASSSSESSSSTSKASSSSPSASETSLLKSAASATSSSQSSSKSKGAAGIIEIPLIFRALAELYNLVL</sequence>
<dbReference type="EC" id="2.4.1.-"/>
<dbReference type="EMBL" id="Z74772">
    <property type="protein sequence ID" value="CAA99030.1"/>
    <property type="molecule type" value="Genomic_DNA"/>
</dbReference>
<dbReference type="EMBL" id="AY693093">
    <property type="protein sequence ID" value="AAT93112.1"/>
    <property type="molecule type" value="Genomic_DNA"/>
</dbReference>
<dbReference type="EMBL" id="BK006948">
    <property type="protein sequence ID" value="DAA10751.1"/>
    <property type="molecule type" value="Genomic_DNA"/>
</dbReference>
<dbReference type="PIR" id="S66713">
    <property type="entry name" value="S66713"/>
</dbReference>
<dbReference type="RefSeq" id="NP_014612.1">
    <property type="nucleotide sequence ID" value="NM_001183284.1"/>
</dbReference>
<dbReference type="SMR" id="Q08193"/>
<dbReference type="BioGRID" id="34370">
    <property type="interactions" value="103"/>
</dbReference>
<dbReference type="DIP" id="DIP-4240N"/>
<dbReference type="FunCoup" id="Q08193">
    <property type="interactions" value="58"/>
</dbReference>
<dbReference type="IntAct" id="Q08193">
    <property type="interactions" value="12"/>
</dbReference>
<dbReference type="MINT" id="Q08193"/>
<dbReference type="STRING" id="4932.YOL030W"/>
<dbReference type="CAZy" id="GH72">
    <property type="family name" value="Glycoside Hydrolase Family 72"/>
</dbReference>
<dbReference type="GlyCosmos" id="Q08193">
    <property type="glycosylation" value="6 sites, No reported glycans"/>
</dbReference>
<dbReference type="GlyGen" id="Q08193">
    <property type="glycosylation" value="7 sites"/>
</dbReference>
<dbReference type="iPTMnet" id="Q08193"/>
<dbReference type="PaxDb" id="4932-YOL030W"/>
<dbReference type="PeptideAtlas" id="Q08193"/>
<dbReference type="EnsemblFungi" id="YOL030W_mRNA">
    <property type="protein sequence ID" value="YOL030W"/>
    <property type="gene ID" value="YOL030W"/>
</dbReference>
<dbReference type="GeneID" id="854127"/>
<dbReference type="KEGG" id="sce:YOL030W"/>
<dbReference type="AGR" id="SGD:S000005390"/>
<dbReference type="SGD" id="S000005390">
    <property type="gene designation" value="GAS5"/>
</dbReference>
<dbReference type="VEuPathDB" id="FungiDB:YOL030W"/>
<dbReference type="eggNOG" id="ENOG502QRZZ">
    <property type="taxonomic scope" value="Eukaryota"/>
</dbReference>
<dbReference type="GeneTree" id="ENSGT00940000176308"/>
<dbReference type="HOGENOM" id="CLU_021855_1_0_1"/>
<dbReference type="InParanoid" id="Q08193"/>
<dbReference type="OMA" id="GVNDYSW"/>
<dbReference type="OrthoDB" id="421038at2759"/>
<dbReference type="BioCyc" id="YEAST:G3O-33446-MONOMER"/>
<dbReference type="BioGRID-ORCS" id="854127">
    <property type="hits" value="6 hits in 10 CRISPR screens"/>
</dbReference>
<dbReference type="PRO" id="PR:Q08193"/>
<dbReference type="Proteomes" id="UP000002311">
    <property type="component" value="Chromosome XV"/>
</dbReference>
<dbReference type="RNAct" id="Q08193">
    <property type="molecule type" value="protein"/>
</dbReference>
<dbReference type="GO" id="GO:0005783">
    <property type="term" value="C:endoplasmic reticulum"/>
    <property type="evidence" value="ECO:0007005"/>
    <property type="project" value="SGD"/>
</dbReference>
<dbReference type="GO" id="GO:0005576">
    <property type="term" value="C:extracellular region"/>
    <property type="evidence" value="ECO:0007669"/>
    <property type="project" value="UniProtKB-KW"/>
</dbReference>
<dbReference type="GO" id="GO:0009277">
    <property type="term" value="C:fungal-type cell wall"/>
    <property type="evidence" value="ECO:0000314"/>
    <property type="project" value="SGD"/>
</dbReference>
<dbReference type="GO" id="GO:0098552">
    <property type="term" value="C:side of membrane"/>
    <property type="evidence" value="ECO:0007669"/>
    <property type="project" value="UniProtKB-KW"/>
</dbReference>
<dbReference type="GO" id="GO:0042124">
    <property type="term" value="F:1,3-beta-glucanosyltransferase activity"/>
    <property type="evidence" value="ECO:0000314"/>
    <property type="project" value="SGD"/>
</dbReference>
<dbReference type="GO" id="GO:0006074">
    <property type="term" value="P:(1-&gt;3)-beta-D-glucan metabolic process"/>
    <property type="evidence" value="ECO:0000305"/>
    <property type="project" value="SGD"/>
</dbReference>
<dbReference type="GO" id="GO:0071970">
    <property type="term" value="P:fungal-type cell wall (1-&gt;3)-beta-D-glucan biosynthetic process"/>
    <property type="evidence" value="ECO:0000318"/>
    <property type="project" value="GO_Central"/>
</dbReference>
<dbReference type="GO" id="GO:0031505">
    <property type="term" value="P:fungal-type cell wall organization"/>
    <property type="evidence" value="ECO:0000318"/>
    <property type="project" value="GO_Central"/>
</dbReference>
<dbReference type="FunFam" id="3.20.20.80:FF:000032">
    <property type="entry name" value="1,3-beta-glucanosyltransferase"/>
    <property type="match status" value="1"/>
</dbReference>
<dbReference type="Gene3D" id="3.20.20.80">
    <property type="entry name" value="Glycosidases"/>
    <property type="match status" value="1"/>
</dbReference>
<dbReference type="InterPro" id="IPR004886">
    <property type="entry name" value="Glucanosyltransferase"/>
</dbReference>
<dbReference type="InterPro" id="IPR017853">
    <property type="entry name" value="Glycoside_hydrolase_SF"/>
</dbReference>
<dbReference type="PANTHER" id="PTHR31468">
    <property type="entry name" value="1,3-BETA-GLUCANOSYLTRANSFERASE GAS1"/>
    <property type="match status" value="1"/>
</dbReference>
<dbReference type="PANTHER" id="PTHR31468:SF5">
    <property type="entry name" value="1,3-BETA-GLUCANOSYLTRANSFERASE GAS5"/>
    <property type="match status" value="1"/>
</dbReference>
<dbReference type="Pfam" id="PF03198">
    <property type="entry name" value="Glyco_hydro_72"/>
    <property type="match status" value="1"/>
</dbReference>
<dbReference type="SUPFAM" id="SSF51445">
    <property type="entry name" value="(Trans)glycosidases"/>
    <property type="match status" value="1"/>
</dbReference>
<gene>
    <name type="primary">GAS5</name>
    <name type="ordered locus">YOL030W</name>
</gene>
<accession>Q08193</accession>
<accession>D6W235</accession>